<comment type="subcellular location">
    <subcellularLocation>
        <location evidence="2">Cytoplasm</location>
    </subcellularLocation>
    <subcellularLocation>
        <location evidence="2">Nucleus</location>
    </subcellularLocation>
</comment>
<name>YCF9_SCHPO</name>
<gene>
    <name type="ORF">SPCC1393.09c</name>
</gene>
<dbReference type="EMBL" id="CU329672">
    <property type="protein sequence ID" value="CAB39357.1"/>
    <property type="molecule type" value="Genomic_DNA"/>
</dbReference>
<dbReference type="PIR" id="T40957">
    <property type="entry name" value="T40957"/>
</dbReference>
<dbReference type="SMR" id="O94721"/>
<dbReference type="BioGRID" id="275459">
    <property type="interactions" value="17"/>
</dbReference>
<dbReference type="FunCoup" id="O94721">
    <property type="interactions" value="238"/>
</dbReference>
<dbReference type="STRING" id="284812.O94721"/>
<dbReference type="PaxDb" id="4896-SPCC1393.09c.1"/>
<dbReference type="EnsemblFungi" id="SPCC1393.09c.1">
    <property type="protein sequence ID" value="SPCC1393.09c.1:pep"/>
    <property type="gene ID" value="SPCC1393.09c"/>
</dbReference>
<dbReference type="KEGG" id="spo:2538880"/>
<dbReference type="PomBase" id="SPCC1393.09c"/>
<dbReference type="VEuPathDB" id="FungiDB:SPCC1393.09c"/>
<dbReference type="eggNOG" id="KOG4018">
    <property type="taxonomic scope" value="Eukaryota"/>
</dbReference>
<dbReference type="HOGENOM" id="CLU_084528_0_1_1"/>
<dbReference type="InParanoid" id="O94721"/>
<dbReference type="OMA" id="QWDEHKK"/>
<dbReference type="PhylomeDB" id="O94721"/>
<dbReference type="PRO" id="PR:O94721"/>
<dbReference type="Proteomes" id="UP000002485">
    <property type="component" value="Chromosome III"/>
</dbReference>
<dbReference type="GO" id="GO:0005829">
    <property type="term" value="C:cytosol"/>
    <property type="evidence" value="ECO:0007005"/>
    <property type="project" value="PomBase"/>
</dbReference>
<dbReference type="GO" id="GO:0005634">
    <property type="term" value="C:nucleus"/>
    <property type="evidence" value="ECO:0007005"/>
    <property type="project" value="PomBase"/>
</dbReference>
<dbReference type="GO" id="GO:0002181">
    <property type="term" value="P:cytoplasmic translation"/>
    <property type="evidence" value="ECO:0000318"/>
    <property type="project" value="GO_Central"/>
</dbReference>
<dbReference type="CDD" id="cd23823">
    <property type="entry name" value="RWD_GCN2"/>
    <property type="match status" value="1"/>
</dbReference>
<dbReference type="Gene3D" id="3.10.110.10">
    <property type="entry name" value="Ubiquitin Conjugating Enzyme"/>
    <property type="match status" value="1"/>
</dbReference>
<dbReference type="InterPro" id="IPR040213">
    <property type="entry name" value="GIR2-like"/>
</dbReference>
<dbReference type="InterPro" id="IPR006575">
    <property type="entry name" value="RWD_dom"/>
</dbReference>
<dbReference type="InterPro" id="IPR016135">
    <property type="entry name" value="UBQ-conjugating_enzyme/RWD"/>
</dbReference>
<dbReference type="PANTHER" id="PTHR12292">
    <property type="entry name" value="RWD DOMAIN-CONTAINING PROTEIN"/>
    <property type="match status" value="1"/>
</dbReference>
<dbReference type="Pfam" id="PF05773">
    <property type="entry name" value="RWD"/>
    <property type="match status" value="1"/>
</dbReference>
<dbReference type="SMART" id="SM00591">
    <property type="entry name" value="RWD"/>
    <property type="match status" value="1"/>
</dbReference>
<dbReference type="SUPFAM" id="SSF54495">
    <property type="entry name" value="UBC-like"/>
    <property type="match status" value="1"/>
</dbReference>
<dbReference type="PROSITE" id="PS50908">
    <property type="entry name" value="RWD"/>
    <property type="match status" value="1"/>
</dbReference>
<feature type="chain" id="PRO_0000372421" description="RWD domain-containing protein C1393.09c">
    <location>
        <begin position="1"/>
        <end position="215"/>
    </location>
</feature>
<feature type="domain" description="RWD" evidence="1">
    <location>
        <begin position="7"/>
        <end position="114"/>
    </location>
</feature>
<protein>
    <recommendedName>
        <fullName>RWD domain-containing protein C1393.09c</fullName>
    </recommendedName>
</protein>
<accession>O94721</accession>
<keyword id="KW-0963">Cytoplasm</keyword>
<keyword id="KW-0539">Nucleus</keyword>
<keyword id="KW-1185">Reference proteome</keyword>
<reference key="1">
    <citation type="journal article" date="2002" name="Nature">
        <title>The genome sequence of Schizosaccharomyces pombe.</title>
        <authorList>
            <person name="Wood V."/>
            <person name="Gwilliam R."/>
            <person name="Rajandream M.A."/>
            <person name="Lyne M.H."/>
            <person name="Lyne R."/>
            <person name="Stewart A."/>
            <person name="Sgouros J.G."/>
            <person name="Peat N."/>
            <person name="Hayles J."/>
            <person name="Baker S.G."/>
            <person name="Basham D."/>
            <person name="Bowman S."/>
            <person name="Brooks K."/>
            <person name="Brown D."/>
            <person name="Brown S."/>
            <person name="Chillingworth T."/>
            <person name="Churcher C.M."/>
            <person name="Collins M."/>
            <person name="Connor R."/>
            <person name="Cronin A."/>
            <person name="Davis P."/>
            <person name="Feltwell T."/>
            <person name="Fraser A."/>
            <person name="Gentles S."/>
            <person name="Goble A."/>
            <person name="Hamlin N."/>
            <person name="Harris D.E."/>
            <person name="Hidalgo J."/>
            <person name="Hodgson G."/>
            <person name="Holroyd S."/>
            <person name="Hornsby T."/>
            <person name="Howarth S."/>
            <person name="Huckle E.J."/>
            <person name="Hunt S."/>
            <person name="Jagels K."/>
            <person name="James K.D."/>
            <person name="Jones L."/>
            <person name="Jones M."/>
            <person name="Leather S."/>
            <person name="McDonald S."/>
            <person name="McLean J."/>
            <person name="Mooney P."/>
            <person name="Moule S."/>
            <person name="Mungall K.L."/>
            <person name="Murphy L.D."/>
            <person name="Niblett D."/>
            <person name="Odell C."/>
            <person name="Oliver K."/>
            <person name="O'Neil S."/>
            <person name="Pearson D."/>
            <person name="Quail M.A."/>
            <person name="Rabbinowitsch E."/>
            <person name="Rutherford K.M."/>
            <person name="Rutter S."/>
            <person name="Saunders D."/>
            <person name="Seeger K."/>
            <person name="Sharp S."/>
            <person name="Skelton J."/>
            <person name="Simmonds M.N."/>
            <person name="Squares R."/>
            <person name="Squares S."/>
            <person name="Stevens K."/>
            <person name="Taylor K."/>
            <person name="Taylor R.G."/>
            <person name="Tivey A."/>
            <person name="Walsh S.V."/>
            <person name="Warren T."/>
            <person name="Whitehead S."/>
            <person name="Woodward J.R."/>
            <person name="Volckaert G."/>
            <person name="Aert R."/>
            <person name="Robben J."/>
            <person name="Grymonprez B."/>
            <person name="Weltjens I."/>
            <person name="Vanstreels E."/>
            <person name="Rieger M."/>
            <person name="Schaefer M."/>
            <person name="Mueller-Auer S."/>
            <person name="Gabel C."/>
            <person name="Fuchs M."/>
            <person name="Duesterhoeft A."/>
            <person name="Fritzc C."/>
            <person name="Holzer E."/>
            <person name="Moestl D."/>
            <person name="Hilbert H."/>
            <person name="Borzym K."/>
            <person name="Langer I."/>
            <person name="Beck A."/>
            <person name="Lehrach H."/>
            <person name="Reinhardt R."/>
            <person name="Pohl T.M."/>
            <person name="Eger P."/>
            <person name="Zimmermann W."/>
            <person name="Wedler H."/>
            <person name="Wambutt R."/>
            <person name="Purnelle B."/>
            <person name="Goffeau A."/>
            <person name="Cadieu E."/>
            <person name="Dreano S."/>
            <person name="Gloux S."/>
            <person name="Lelaure V."/>
            <person name="Mottier S."/>
            <person name="Galibert F."/>
            <person name="Aves S.J."/>
            <person name="Xiang Z."/>
            <person name="Hunt C."/>
            <person name="Moore K."/>
            <person name="Hurst S.M."/>
            <person name="Lucas M."/>
            <person name="Rochet M."/>
            <person name="Gaillardin C."/>
            <person name="Tallada V.A."/>
            <person name="Garzon A."/>
            <person name="Thode G."/>
            <person name="Daga R.R."/>
            <person name="Cruzado L."/>
            <person name="Jimenez J."/>
            <person name="Sanchez M."/>
            <person name="del Rey F."/>
            <person name="Benito J."/>
            <person name="Dominguez A."/>
            <person name="Revuelta J.L."/>
            <person name="Moreno S."/>
            <person name="Armstrong J."/>
            <person name="Forsburg S.L."/>
            <person name="Cerutti L."/>
            <person name="Lowe T."/>
            <person name="McCombie W.R."/>
            <person name="Paulsen I."/>
            <person name="Potashkin J."/>
            <person name="Shpakovski G.V."/>
            <person name="Ussery D."/>
            <person name="Barrell B.G."/>
            <person name="Nurse P."/>
        </authorList>
    </citation>
    <scope>NUCLEOTIDE SEQUENCE [LARGE SCALE GENOMIC DNA]</scope>
    <source>
        <strain>972 / ATCC 24843</strain>
    </source>
</reference>
<reference key="2">
    <citation type="journal article" date="2006" name="Nat. Biotechnol.">
        <title>ORFeome cloning and global analysis of protein localization in the fission yeast Schizosaccharomyces pombe.</title>
        <authorList>
            <person name="Matsuyama A."/>
            <person name="Arai R."/>
            <person name="Yashiroda Y."/>
            <person name="Shirai A."/>
            <person name="Kamata A."/>
            <person name="Sekido S."/>
            <person name="Kobayashi Y."/>
            <person name="Hashimoto A."/>
            <person name="Hamamoto M."/>
            <person name="Hiraoka Y."/>
            <person name="Horinouchi S."/>
            <person name="Yoshida M."/>
        </authorList>
    </citation>
    <scope>SUBCELLULAR LOCATION [LARGE SCALE ANALYSIS]</scope>
</reference>
<sequence>MTSAIEEEREILESIYPEEFKCINDSTFEITQPIDREESNCDNPPSLIFTCQLSEAYPDEVPDVKITFSEPHPWLGEEEIERLKQVVAQNAEECLGMAMIFSLCSVAKEETNAILIEQSQRETQAIEERHRKEAEQENKKFHGTPVTVESFTEWKKGFDAWRNEQLKLEQESKLKEALSAASSSNARKAILEKRMTGRELFENNLVKLDDVEGEA</sequence>
<evidence type="ECO:0000255" key="1">
    <source>
        <dbReference type="PROSITE-ProRule" id="PRU00179"/>
    </source>
</evidence>
<evidence type="ECO:0000269" key="2">
    <source>
    </source>
</evidence>
<proteinExistence type="predicted"/>
<organism>
    <name type="scientific">Schizosaccharomyces pombe (strain 972 / ATCC 24843)</name>
    <name type="common">Fission yeast</name>
    <dbReference type="NCBI Taxonomy" id="284812"/>
    <lineage>
        <taxon>Eukaryota</taxon>
        <taxon>Fungi</taxon>
        <taxon>Dikarya</taxon>
        <taxon>Ascomycota</taxon>
        <taxon>Taphrinomycotina</taxon>
        <taxon>Schizosaccharomycetes</taxon>
        <taxon>Schizosaccharomycetales</taxon>
        <taxon>Schizosaccharomycetaceae</taxon>
        <taxon>Schizosaccharomyces</taxon>
    </lineage>
</organism>